<protein>
    <recommendedName>
        <fullName evidence="1">Serine/threonine transporter SstT</fullName>
    </recommendedName>
    <alternativeName>
        <fullName evidence="1">Na(+)/serine-threonine symporter</fullName>
    </alternativeName>
</protein>
<name>SSTT_CAMFF</name>
<proteinExistence type="inferred from homology"/>
<keyword id="KW-0029">Amino-acid transport</keyword>
<keyword id="KW-0997">Cell inner membrane</keyword>
<keyword id="KW-1003">Cell membrane</keyword>
<keyword id="KW-0472">Membrane</keyword>
<keyword id="KW-0769">Symport</keyword>
<keyword id="KW-0812">Transmembrane</keyword>
<keyword id="KW-1133">Transmembrane helix</keyword>
<keyword id="KW-0813">Transport</keyword>
<reference key="1">
    <citation type="submission" date="2006-11" db="EMBL/GenBank/DDBJ databases">
        <title>Sequence of Campylobacter fetus subsp. fetus 82-40.</title>
        <authorList>
            <person name="Fouts D.E."/>
            <person name="Nelson K.E."/>
        </authorList>
    </citation>
    <scope>NUCLEOTIDE SEQUENCE [LARGE SCALE GENOMIC DNA]</scope>
    <source>
        <strain>82-40</strain>
    </source>
</reference>
<accession>A0RNW2</accession>
<organism>
    <name type="scientific">Campylobacter fetus subsp. fetus (strain 82-40)</name>
    <dbReference type="NCBI Taxonomy" id="360106"/>
    <lineage>
        <taxon>Bacteria</taxon>
        <taxon>Pseudomonadati</taxon>
        <taxon>Campylobacterota</taxon>
        <taxon>Epsilonproteobacteria</taxon>
        <taxon>Campylobacterales</taxon>
        <taxon>Campylobacteraceae</taxon>
        <taxon>Campylobacter</taxon>
    </lineage>
</organism>
<evidence type="ECO:0000255" key="1">
    <source>
        <dbReference type="HAMAP-Rule" id="MF_01582"/>
    </source>
</evidence>
<comment type="function">
    <text evidence="1">Involved in the import of serine and threonine into the cell, with the concomitant import of sodium (symport system).</text>
</comment>
<comment type="catalytic activity">
    <reaction evidence="1">
        <text>L-serine(in) + Na(+)(in) = L-serine(out) + Na(+)(out)</text>
        <dbReference type="Rhea" id="RHEA:29575"/>
        <dbReference type="ChEBI" id="CHEBI:29101"/>
        <dbReference type="ChEBI" id="CHEBI:33384"/>
    </reaction>
    <physiologicalReaction direction="right-to-left" evidence="1">
        <dbReference type="Rhea" id="RHEA:29577"/>
    </physiologicalReaction>
</comment>
<comment type="catalytic activity">
    <reaction evidence="1">
        <text>L-threonine(in) + Na(+)(in) = L-threonine(out) + Na(+)(out)</text>
        <dbReference type="Rhea" id="RHEA:69999"/>
        <dbReference type="ChEBI" id="CHEBI:29101"/>
        <dbReference type="ChEBI" id="CHEBI:57926"/>
    </reaction>
    <physiologicalReaction direction="right-to-left" evidence="1">
        <dbReference type="Rhea" id="RHEA:70001"/>
    </physiologicalReaction>
</comment>
<comment type="subcellular location">
    <subcellularLocation>
        <location evidence="1">Cell inner membrane</location>
        <topology evidence="1">Multi-pass membrane protein</topology>
    </subcellularLocation>
</comment>
<comment type="similarity">
    <text evidence="1">Belongs to the dicarboxylate/amino acid:cation symporter (DAACS) (TC 2.A.23) family.</text>
</comment>
<feature type="chain" id="PRO_0000309076" description="Serine/threonine transporter SstT">
    <location>
        <begin position="1"/>
        <end position="409"/>
    </location>
</feature>
<feature type="transmembrane region" description="Helical" evidence="1">
    <location>
        <begin position="14"/>
        <end position="34"/>
    </location>
</feature>
<feature type="transmembrane region" description="Helical" evidence="1">
    <location>
        <begin position="57"/>
        <end position="77"/>
    </location>
</feature>
<feature type="transmembrane region" description="Helical" evidence="1">
    <location>
        <begin position="89"/>
        <end position="109"/>
    </location>
</feature>
<feature type="transmembrane region" description="Helical" evidence="1">
    <location>
        <begin position="149"/>
        <end position="169"/>
    </location>
</feature>
<feature type="transmembrane region" description="Helical" evidence="1">
    <location>
        <begin position="190"/>
        <end position="210"/>
    </location>
</feature>
<feature type="transmembrane region" description="Helical" evidence="1">
    <location>
        <begin position="224"/>
        <end position="244"/>
    </location>
</feature>
<feature type="transmembrane region" description="Helical" evidence="1">
    <location>
        <begin position="296"/>
        <end position="316"/>
    </location>
</feature>
<feature type="transmembrane region" description="Helical" evidence="1">
    <location>
        <begin position="338"/>
        <end position="358"/>
    </location>
</feature>
<feature type="transmembrane region" description="Helical" evidence="1">
    <location>
        <begin position="365"/>
        <end position="385"/>
    </location>
</feature>
<dbReference type="EMBL" id="CP000487">
    <property type="protein sequence ID" value="ABK82055.1"/>
    <property type="molecule type" value="Genomic_DNA"/>
</dbReference>
<dbReference type="SMR" id="A0RNW2"/>
<dbReference type="KEGG" id="cff:CFF8240_0720"/>
<dbReference type="eggNOG" id="COG3633">
    <property type="taxonomic scope" value="Bacteria"/>
</dbReference>
<dbReference type="HOGENOM" id="CLU_044581_0_0_7"/>
<dbReference type="Proteomes" id="UP000000760">
    <property type="component" value="Chromosome"/>
</dbReference>
<dbReference type="GO" id="GO:0005886">
    <property type="term" value="C:plasma membrane"/>
    <property type="evidence" value="ECO:0007669"/>
    <property type="project" value="UniProtKB-SubCell"/>
</dbReference>
<dbReference type="GO" id="GO:0005295">
    <property type="term" value="F:neutral L-amino acid:sodium symporter activity"/>
    <property type="evidence" value="ECO:0007669"/>
    <property type="project" value="TreeGrafter"/>
</dbReference>
<dbReference type="GO" id="GO:0032329">
    <property type="term" value="P:serine transport"/>
    <property type="evidence" value="ECO:0007669"/>
    <property type="project" value="InterPro"/>
</dbReference>
<dbReference type="GO" id="GO:0015826">
    <property type="term" value="P:threonine transport"/>
    <property type="evidence" value="ECO:0007669"/>
    <property type="project" value="InterPro"/>
</dbReference>
<dbReference type="FunFam" id="1.10.3860.10:FF:000003">
    <property type="entry name" value="Serine/threonine transporter sstT"/>
    <property type="match status" value="1"/>
</dbReference>
<dbReference type="Gene3D" id="1.10.3860.10">
    <property type="entry name" value="Sodium:dicarboxylate symporter"/>
    <property type="match status" value="1"/>
</dbReference>
<dbReference type="HAMAP" id="MF_01582">
    <property type="entry name" value="Ser_Thr_transp_SstT"/>
    <property type="match status" value="1"/>
</dbReference>
<dbReference type="InterPro" id="IPR001991">
    <property type="entry name" value="Na-dicarboxylate_symporter"/>
</dbReference>
<dbReference type="InterPro" id="IPR036458">
    <property type="entry name" value="Na:dicarbo_symporter_sf"/>
</dbReference>
<dbReference type="InterPro" id="IPR023025">
    <property type="entry name" value="Ser_Thr_transp_SstT"/>
</dbReference>
<dbReference type="NCBIfam" id="NF010151">
    <property type="entry name" value="PRK13628.1"/>
    <property type="match status" value="1"/>
</dbReference>
<dbReference type="PANTHER" id="PTHR42865">
    <property type="entry name" value="PROTON/GLUTAMATE-ASPARTATE SYMPORTER"/>
    <property type="match status" value="1"/>
</dbReference>
<dbReference type="PANTHER" id="PTHR42865:SF8">
    <property type="entry name" value="SERINE_THREONINE TRANSPORTER SSTT"/>
    <property type="match status" value="1"/>
</dbReference>
<dbReference type="Pfam" id="PF00375">
    <property type="entry name" value="SDF"/>
    <property type="match status" value="1"/>
</dbReference>
<dbReference type="PRINTS" id="PR00173">
    <property type="entry name" value="EDTRNSPORT"/>
</dbReference>
<dbReference type="SUPFAM" id="SSF118215">
    <property type="entry name" value="Proton glutamate symport protein"/>
    <property type="match status" value="1"/>
</dbReference>
<gene>
    <name evidence="1" type="primary">sstT</name>
    <name type="ordered locus">CFF8240_0720</name>
</gene>
<sequence length="409" mass="42598">MGMFTKLTKSYTDGNLIIQILIGITIGGILGFIAHKSSVEAAIVVNAASMLGNLFVGALKAVAPILVFILVASSIIIKEFGQANGLKNIIILYLVGTFLASLSAVVVSFIFPTTLVLQNTSNALASAPQSIIVVLKDLVFKMVDNPVHAISSGNYIGILTWAIGTGIALRHSSIETKKIFKDISEGITRIVKFIIKLAPFGIFGLVATSVAEAGFEAIGGYAKLLLVLVGTMLFVAFVVNAAIVYFVTKQNPYPLIMTCIKESAVTAFFTRSSAANIPVNMSLCKKLNLDEKLYSISIPLGATINMAGAAVTIAVLSLSAVNTLNIQVGFLDALLLSIIAAIGACGASGVAGGSLMLIPLACSLFGISNDIAMQVVAVGFIIGVVQDSIETALNSSTDVLFTAIASQKS</sequence>